<evidence type="ECO:0000250" key="1"/>
<evidence type="ECO:0000255" key="2"/>
<evidence type="ECO:0000269" key="3">
    <source>
    </source>
</evidence>
<evidence type="ECO:0000303" key="4">
    <source>
    </source>
</evidence>
<evidence type="ECO:0000305" key="5"/>
<evidence type="ECO:0000312" key="6">
    <source>
        <dbReference type="FlyBase" id="FBgn0013749"/>
    </source>
</evidence>
<feature type="initiator methionine" description="Removed" evidence="2">
    <location>
        <position position="1"/>
    </location>
</feature>
<feature type="chain" id="PRO_0000207443" description="ADP ribosylation factor 4">
    <location>
        <begin position="2"/>
        <end position="180"/>
    </location>
</feature>
<feature type="binding site" evidence="1">
    <location>
        <begin position="24"/>
        <end position="31"/>
    </location>
    <ligand>
        <name>GTP</name>
        <dbReference type="ChEBI" id="CHEBI:37565"/>
    </ligand>
</feature>
<feature type="binding site" evidence="1">
    <location>
        <begin position="67"/>
        <end position="71"/>
    </location>
    <ligand>
        <name>GTP</name>
        <dbReference type="ChEBI" id="CHEBI:37565"/>
    </ligand>
</feature>
<feature type="binding site" evidence="1">
    <location>
        <begin position="126"/>
        <end position="129"/>
    </location>
    <ligand>
        <name>GTP</name>
        <dbReference type="ChEBI" id="CHEBI:37565"/>
    </ligand>
</feature>
<feature type="lipid moiety-binding region" description="N-myristoyl glycine" evidence="2">
    <location>
        <position position="2"/>
    </location>
</feature>
<proteinExistence type="evidence at transcript level"/>
<sequence length="180" mass="20617">MGLTISSLLTRLFGKKQMRILMVGLDAAGKTTILYKLKLGEIVTTIPTIGFNVETVEYKNICFTVWDVGGQDKIRPLWRHYFQNTQGLIFVVDSNDRDRITEAERELQNMLQEDELRDAVLLVFANKQDLPNAMTAAELTDKLRLNQLRNRHWFIQSTCATQGHGLYEGLDWLSAELAKK</sequence>
<keyword id="KW-0931">ER-Golgi transport</keyword>
<keyword id="KW-0333">Golgi apparatus</keyword>
<keyword id="KW-0342">GTP-binding</keyword>
<keyword id="KW-0449">Lipoprotein</keyword>
<keyword id="KW-0519">Myristate</keyword>
<keyword id="KW-0547">Nucleotide-binding</keyword>
<keyword id="KW-0653">Protein transport</keyword>
<keyword id="KW-1185">Reference proteome</keyword>
<keyword id="KW-0813">Transport</keyword>
<name>ARF4_DROME</name>
<gene>
    <name evidence="6" type="primary">Arf4</name>
    <name evidence="6" type="synonym">Arf102F</name>
    <name evidence="6" type="synonym">ARF2</name>
    <name evidence="6" type="ORF">CG11027</name>
</gene>
<comment type="function">
    <text evidence="3">GTP-binding protein involved in protein trafficking; may modulate vesicle budding and uncoating within the Golgi apparatus.</text>
</comment>
<comment type="subcellular location">
    <subcellularLocation>
        <location>Golgi apparatus</location>
    </subcellularLocation>
</comment>
<comment type="tissue specificity">
    <text evidence="3">Uniformly distributed throughout adults.</text>
</comment>
<comment type="similarity">
    <text evidence="5">Belongs to the small GTPase superfamily. Arf family.</text>
</comment>
<accession>P40945</accession>
<accession>Q9V499</accession>
<reference key="1">
    <citation type="journal article" date="1994" name="J. Biol. Chem.">
        <title>Characterization of class II and class III ADP-ribosylation factor genes and proteins in Drosophila melanogaster.</title>
        <authorList>
            <person name="Lee F.-J.S."/>
            <person name="Stevens L.A."/>
            <person name="Hall L.M."/>
            <person name="Murtagh J.J. Jr."/>
            <person name="Kao Y.L."/>
            <person name="Moss J."/>
            <person name="Vaughan M."/>
        </authorList>
    </citation>
    <scope>NUCLEOTIDE SEQUENCE [GENOMIC DNA]</scope>
    <scope>FUNCTION</scope>
    <scope>TISSUE SPECIFICITY</scope>
</reference>
<reference key="2">
    <citation type="journal article" date="2000" name="Science">
        <title>The genome sequence of Drosophila melanogaster.</title>
        <authorList>
            <person name="Adams M.D."/>
            <person name="Celniker S.E."/>
            <person name="Holt R.A."/>
            <person name="Evans C.A."/>
            <person name="Gocayne J.D."/>
            <person name="Amanatides P.G."/>
            <person name="Scherer S.E."/>
            <person name="Li P.W."/>
            <person name="Hoskins R.A."/>
            <person name="Galle R.F."/>
            <person name="George R.A."/>
            <person name="Lewis S.E."/>
            <person name="Richards S."/>
            <person name="Ashburner M."/>
            <person name="Henderson S.N."/>
            <person name="Sutton G.G."/>
            <person name="Wortman J.R."/>
            <person name="Yandell M.D."/>
            <person name="Zhang Q."/>
            <person name="Chen L.X."/>
            <person name="Brandon R.C."/>
            <person name="Rogers Y.-H.C."/>
            <person name="Blazej R.G."/>
            <person name="Champe M."/>
            <person name="Pfeiffer B.D."/>
            <person name="Wan K.H."/>
            <person name="Doyle C."/>
            <person name="Baxter E.G."/>
            <person name="Helt G."/>
            <person name="Nelson C.R."/>
            <person name="Miklos G.L.G."/>
            <person name="Abril J.F."/>
            <person name="Agbayani A."/>
            <person name="An H.-J."/>
            <person name="Andrews-Pfannkoch C."/>
            <person name="Baldwin D."/>
            <person name="Ballew R.M."/>
            <person name="Basu A."/>
            <person name="Baxendale J."/>
            <person name="Bayraktaroglu L."/>
            <person name="Beasley E.M."/>
            <person name="Beeson K.Y."/>
            <person name="Benos P.V."/>
            <person name="Berman B.P."/>
            <person name="Bhandari D."/>
            <person name="Bolshakov S."/>
            <person name="Borkova D."/>
            <person name="Botchan M.R."/>
            <person name="Bouck J."/>
            <person name="Brokstein P."/>
            <person name="Brottier P."/>
            <person name="Burtis K.C."/>
            <person name="Busam D.A."/>
            <person name="Butler H."/>
            <person name="Cadieu E."/>
            <person name="Center A."/>
            <person name="Chandra I."/>
            <person name="Cherry J.M."/>
            <person name="Cawley S."/>
            <person name="Dahlke C."/>
            <person name="Davenport L.B."/>
            <person name="Davies P."/>
            <person name="de Pablos B."/>
            <person name="Delcher A."/>
            <person name="Deng Z."/>
            <person name="Mays A.D."/>
            <person name="Dew I."/>
            <person name="Dietz S.M."/>
            <person name="Dodson K."/>
            <person name="Doup L.E."/>
            <person name="Downes M."/>
            <person name="Dugan-Rocha S."/>
            <person name="Dunkov B.C."/>
            <person name="Dunn P."/>
            <person name="Durbin K.J."/>
            <person name="Evangelista C.C."/>
            <person name="Ferraz C."/>
            <person name="Ferriera S."/>
            <person name="Fleischmann W."/>
            <person name="Fosler C."/>
            <person name="Gabrielian A.E."/>
            <person name="Garg N.S."/>
            <person name="Gelbart W.M."/>
            <person name="Glasser K."/>
            <person name="Glodek A."/>
            <person name="Gong F."/>
            <person name="Gorrell J.H."/>
            <person name="Gu Z."/>
            <person name="Guan P."/>
            <person name="Harris M."/>
            <person name="Harris N.L."/>
            <person name="Harvey D.A."/>
            <person name="Heiman T.J."/>
            <person name="Hernandez J.R."/>
            <person name="Houck J."/>
            <person name="Hostin D."/>
            <person name="Houston K.A."/>
            <person name="Howland T.J."/>
            <person name="Wei M.-H."/>
            <person name="Ibegwam C."/>
            <person name="Jalali M."/>
            <person name="Kalush F."/>
            <person name="Karpen G.H."/>
            <person name="Ke Z."/>
            <person name="Kennison J.A."/>
            <person name="Ketchum K.A."/>
            <person name="Kimmel B.E."/>
            <person name="Kodira C.D."/>
            <person name="Kraft C.L."/>
            <person name="Kravitz S."/>
            <person name="Kulp D."/>
            <person name="Lai Z."/>
            <person name="Lasko P."/>
            <person name="Lei Y."/>
            <person name="Levitsky A.A."/>
            <person name="Li J.H."/>
            <person name="Li Z."/>
            <person name="Liang Y."/>
            <person name="Lin X."/>
            <person name="Liu X."/>
            <person name="Mattei B."/>
            <person name="McIntosh T.C."/>
            <person name="McLeod M.P."/>
            <person name="McPherson D."/>
            <person name="Merkulov G."/>
            <person name="Milshina N.V."/>
            <person name="Mobarry C."/>
            <person name="Morris J."/>
            <person name="Moshrefi A."/>
            <person name="Mount S.M."/>
            <person name="Moy M."/>
            <person name="Murphy B."/>
            <person name="Murphy L."/>
            <person name="Muzny D.M."/>
            <person name="Nelson D.L."/>
            <person name="Nelson D.R."/>
            <person name="Nelson K.A."/>
            <person name="Nixon K."/>
            <person name="Nusskern D.R."/>
            <person name="Pacleb J.M."/>
            <person name="Palazzolo M."/>
            <person name="Pittman G.S."/>
            <person name="Pan S."/>
            <person name="Pollard J."/>
            <person name="Puri V."/>
            <person name="Reese M.G."/>
            <person name="Reinert K."/>
            <person name="Remington K."/>
            <person name="Saunders R.D.C."/>
            <person name="Scheeler F."/>
            <person name="Shen H."/>
            <person name="Shue B.C."/>
            <person name="Siden-Kiamos I."/>
            <person name="Simpson M."/>
            <person name="Skupski M.P."/>
            <person name="Smith T.J."/>
            <person name="Spier E."/>
            <person name="Spradling A.C."/>
            <person name="Stapleton M."/>
            <person name="Strong R."/>
            <person name="Sun E."/>
            <person name="Svirskas R."/>
            <person name="Tector C."/>
            <person name="Turner R."/>
            <person name="Venter E."/>
            <person name="Wang A.H."/>
            <person name="Wang X."/>
            <person name="Wang Z.-Y."/>
            <person name="Wassarman D.A."/>
            <person name="Weinstock G.M."/>
            <person name="Weissenbach J."/>
            <person name="Williams S.M."/>
            <person name="Woodage T."/>
            <person name="Worley K.C."/>
            <person name="Wu D."/>
            <person name="Yang S."/>
            <person name="Yao Q.A."/>
            <person name="Ye J."/>
            <person name="Yeh R.-F."/>
            <person name="Zaveri J.S."/>
            <person name="Zhan M."/>
            <person name="Zhang G."/>
            <person name="Zhao Q."/>
            <person name="Zheng L."/>
            <person name="Zheng X.H."/>
            <person name="Zhong F.N."/>
            <person name="Zhong W."/>
            <person name="Zhou X."/>
            <person name="Zhu S.C."/>
            <person name="Zhu X."/>
            <person name="Smith H.O."/>
            <person name="Gibbs R.A."/>
            <person name="Myers E.W."/>
            <person name="Rubin G.M."/>
            <person name="Venter J.C."/>
        </authorList>
    </citation>
    <scope>NUCLEOTIDE SEQUENCE [LARGE SCALE GENOMIC DNA]</scope>
    <source>
        <strain>Berkeley</strain>
    </source>
</reference>
<reference key="3">
    <citation type="journal article" date="2002" name="Genome Biol.">
        <title>Annotation of the Drosophila melanogaster euchromatic genome: a systematic review.</title>
        <authorList>
            <person name="Misra S."/>
            <person name="Crosby M.A."/>
            <person name="Mungall C.J."/>
            <person name="Matthews B.B."/>
            <person name="Campbell K.S."/>
            <person name="Hradecky P."/>
            <person name="Huang Y."/>
            <person name="Kaminker J.S."/>
            <person name="Millburn G.H."/>
            <person name="Prochnik S.E."/>
            <person name="Smith C.D."/>
            <person name="Tupy J.L."/>
            <person name="Whitfield E.J."/>
            <person name="Bayraktaroglu L."/>
            <person name="Berman B.P."/>
            <person name="Bettencourt B.R."/>
            <person name="Celniker S.E."/>
            <person name="de Grey A.D.N.J."/>
            <person name="Drysdale R.A."/>
            <person name="Harris N.L."/>
            <person name="Richter J."/>
            <person name="Russo S."/>
            <person name="Schroeder A.J."/>
            <person name="Shu S.Q."/>
            <person name="Stapleton M."/>
            <person name="Yamada C."/>
            <person name="Ashburner M."/>
            <person name="Gelbart W.M."/>
            <person name="Rubin G.M."/>
            <person name="Lewis S.E."/>
        </authorList>
    </citation>
    <scope>GENOME REANNOTATION</scope>
    <source>
        <strain>Berkeley</strain>
    </source>
</reference>
<reference key="4">
    <citation type="journal article" date="2002" name="Genome Biol.">
        <title>A Drosophila full-length cDNA resource.</title>
        <authorList>
            <person name="Stapleton M."/>
            <person name="Carlson J.W."/>
            <person name="Brokstein P."/>
            <person name="Yu C."/>
            <person name="Champe M."/>
            <person name="George R.A."/>
            <person name="Guarin H."/>
            <person name="Kronmiller B."/>
            <person name="Pacleb J.M."/>
            <person name="Park S."/>
            <person name="Wan K.H."/>
            <person name="Rubin G.M."/>
            <person name="Celniker S.E."/>
        </authorList>
    </citation>
    <scope>NUCLEOTIDE SEQUENCE [LARGE SCALE MRNA]</scope>
    <source>
        <strain>Berkeley</strain>
        <tissue>Embryo</tissue>
    </source>
</reference>
<organism>
    <name type="scientific">Drosophila melanogaster</name>
    <name type="common">Fruit fly</name>
    <dbReference type="NCBI Taxonomy" id="7227"/>
    <lineage>
        <taxon>Eukaryota</taxon>
        <taxon>Metazoa</taxon>
        <taxon>Ecdysozoa</taxon>
        <taxon>Arthropoda</taxon>
        <taxon>Hexapoda</taxon>
        <taxon>Insecta</taxon>
        <taxon>Pterygota</taxon>
        <taxon>Neoptera</taxon>
        <taxon>Endopterygota</taxon>
        <taxon>Diptera</taxon>
        <taxon>Brachycera</taxon>
        <taxon>Muscomorpha</taxon>
        <taxon>Ephydroidea</taxon>
        <taxon>Drosophilidae</taxon>
        <taxon>Drosophila</taxon>
        <taxon>Sophophora</taxon>
    </lineage>
</organism>
<protein>
    <recommendedName>
        <fullName evidence="6">ADP ribosylation factor 4</fullName>
    </recommendedName>
    <alternativeName>
        <fullName evidence="4">dARF II</fullName>
    </alternativeName>
</protein>
<dbReference type="EMBL" id="L25062">
    <property type="protein sequence ID" value="AAA53667.1"/>
    <property type="molecule type" value="Genomic_DNA"/>
</dbReference>
<dbReference type="EMBL" id="AE014135">
    <property type="protein sequence ID" value="AAF59383.1"/>
    <property type="molecule type" value="Genomic_DNA"/>
</dbReference>
<dbReference type="EMBL" id="AY071450">
    <property type="protein sequence ID" value="AAL49072.1"/>
    <property type="molecule type" value="mRNA"/>
</dbReference>
<dbReference type="PIR" id="A53859">
    <property type="entry name" value="A53859"/>
</dbReference>
<dbReference type="RefSeq" id="NP_001259087.1">
    <property type="nucleotide sequence ID" value="NM_001272158.1"/>
</dbReference>
<dbReference type="RefSeq" id="NP_524631.1">
    <property type="nucleotide sequence ID" value="NM_079892.3"/>
</dbReference>
<dbReference type="SMR" id="P40945"/>
<dbReference type="BioGRID" id="68649">
    <property type="interactions" value="33"/>
</dbReference>
<dbReference type="DIP" id="DIP-17574N"/>
<dbReference type="FunCoup" id="P40945">
    <property type="interactions" value="893"/>
</dbReference>
<dbReference type="IntAct" id="P40945">
    <property type="interactions" value="73"/>
</dbReference>
<dbReference type="STRING" id="7227.FBpp0088256"/>
<dbReference type="PaxDb" id="7227-FBpp0088256"/>
<dbReference type="DNASU" id="43823"/>
<dbReference type="EnsemblMetazoa" id="FBtr0089192">
    <property type="protein sequence ID" value="FBpp0088256"/>
    <property type="gene ID" value="FBgn0013749"/>
</dbReference>
<dbReference type="EnsemblMetazoa" id="FBtr0333699">
    <property type="protein sequence ID" value="FBpp0305852"/>
    <property type="gene ID" value="FBgn0013749"/>
</dbReference>
<dbReference type="GeneID" id="43823"/>
<dbReference type="KEGG" id="dme:Dmel_CG11027"/>
<dbReference type="AGR" id="FB:FBgn0013749"/>
<dbReference type="CTD" id="378"/>
<dbReference type="FlyBase" id="FBgn0013749">
    <property type="gene designation" value="Arf4"/>
</dbReference>
<dbReference type="VEuPathDB" id="VectorBase:FBgn0013749"/>
<dbReference type="eggNOG" id="KOG0070">
    <property type="taxonomic scope" value="Eukaryota"/>
</dbReference>
<dbReference type="GeneTree" id="ENSGT00940000156878"/>
<dbReference type="HOGENOM" id="CLU_040729_9_3_1"/>
<dbReference type="InParanoid" id="P40945"/>
<dbReference type="OMA" id="DWLCNEL"/>
<dbReference type="OrthoDB" id="2011769at2759"/>
<dbReference type="PhylomeDB" id="P40945"/>
<dbReference type="Reactome" id="R-DME-5620916">
    <property type="pathway name" value="VxPx cargo-targeting to cilium"/>
</dbReference>
<dbReference type="Reactome" id="R-DME-6807878">
    <property type="pathway name" value="COPI-mediated anterograde transport"/>
</dbReference>
<dbReference type="Reactome" id="R-DME-6811434">
    <property type="pathway name" value="COPI-dependent Golgi-to-ER retrograde traffic"/>
</dbReference>
<dbReference type="BioGRID-ORCS" id="43823">
    <property type="hits" value="1 hit in 3 CRISPR screens"/>
</dbReference>
<dbReference type="GenomeRNAi" id="43823"/>
<dbReference type="PRO" id="PR:P40945"/>
<dbReference type="Proteomes" id="UP000000803">
    <property type="component" value="Chromosome 4"/>
</dbReference>
<dbReference type="Bgee" id="FBgn0013749">
    <property type="expression patterns" value="Expressed in adult abdomen and 241 other cell types or tissues"/>
</dbReference>
<dbReference type="ExpressionAtlas" id="P40945">
    <property type="expression patterns" value="baseline and differential"/>
</dbReference>
<dbReference type="GO" id="GO:0005737">
    <property type="term" value="C:cytoplasm"/>
    <property type="evidence" value="ECO:0000318"/>
    <property type="project" value="GO_Central"/>
</dbReference>
<dbReference type="GO" id="GO:0005794">
    <property type="term" value="C:Golgi apparatus"/>
    <property type="evidence" value="ECO:0007669"/>
    <property type="project" value="UniProtKB-SubCell"/>
</dbReference>
<dbReference type="GO" id="GO:0005886">
    <property type="term" value="C:plasma membrane"/>
    <property type="evidence" value="ECO:0000318"/>
    <property type="project" value="GO_Central"/>
</dbReference>
<dbReference type="GO" id="GO:0098793">
    <property type="term" value="C:presynapse"/>
    <property type="evidence" value="ECO:0007669"/>
    <property type="project" value="GOC"/>
</dbReference>
<dbReference type="GO" id="GO:0008047">
    <property type="term" value="F:enzyme activator activity"/>
    <property type="evidence" value="ECO:0000314"/>
    <property type="project" value="FlyBase"/>
</dbReference>
<dbReference type="GO" id="GO:0005525">
    <property type="term" value="F:GTP binding"/>
    <property type="evidence" value="ECO:0000318"/>
    <property type="project" value="GO_Central"/>
</dbReference>
<dbReference type="GO" id="GO:0003924">
    <property type="term" value="F:GTPase activity"/>
    <property type="evidence" value="ECO:0000250"/>
    <property type="project" value="FlyBase"/>
</dbReference>
<dbReference type="GO" id="GO:0048749">
    <property type="term" value="P:compound eye development"/>
    <property type="evidence" value="ECO:0000315"/>
    <property type="project" value="FlyBase"/>
</dbReference>
<dbReference type="GO" id="GO:0006886">
    <property type="term" value="P:intracellular protein transport"/>
    <property type="evidence" value="ECO:0000318"/>
    <property type="project" value="GO_Central"/>
</dbReference>
<dbReference type="GO" id="GO:0046718">
    <property type="term" value="P:symbiont entry into host cell"/>
    <property type="evidence" value="ECO:0007001"/>
    <property type="project" value="FlyBase"/>
</dbReference>
<dbReference type="GO" id="GO:0048488">
    <property type="term" value="P:synaptic vesicle endocytosis"/>
    <property type="evidence" value="ECO:0000304"/>
    <property type="project" value="FlyBase"/>
</dbReference>
<dbReference type="GO" id="GO:0016192">
    <property type="term" value="P:vesicle-mediated transport"/>
    <property type="evidence" value="ECO:0000318"/>
    <property type="project" value="GO_Central"/>
</dbReference>
<dbReference type="CDD" id="cd04150">
    <property type="entry name" value="Arf1_5_like"/>
    <property type="match status" value="1"/>
</dbReference>
<dbReference type="FunFam" id="3.40.50.300:FF:000024">
    <property type="entry name" value="ADP-ribosylation factor 1"/>
    <property type="match status" value="1"/>
</dbReference>
<dbReference type="Gene3D" id="3.40.50.300">
    <property type="entry name" value="P-loop containing nucleotide triphosphate hydrolases"/>
    <property type="match status" value="1"/>
</dbReference>
<dbReference type="InterPro" id="IPR045872">
    <property type="entry name" value="Arf1-5-like"/>
</dbReference>
<dbReference type="InterPro" id="IPR027417">
    <property type="entry name" value="P-loop_NTPase"/>
</dbReference>
<dbReference type="InterPro" id="IPR005225">
    <property type="entry name" value="Small_GTP-bd"/>
</dbReference>
<dbReference type="InterPro" id="IPR024156">
    <property type="entry name" value="Small_GTPase_ARF"/>
</dbReference>
<dbReference type="InterPro" id="IPR006689">
    <property type="entry name" value="Small_GTPase_ARF/SAR"/>
</dbReference>
<dbReference type="NCBIfam" id="TIGR00231">
    <property type="entry name" value="small_GTP"/>
    <property type="match status" value="1"/>
</dbReference>
<dbReference type="PANTHER" id="PTHR11711">
    <property type="entry name" value="ADP RIBOSYLATION FACTOR-RELATED"/>
    <property type="match status" value="1"/>
</dbReference>
<dbReference type="Pfam" id="PF00025">
    <property type="entry name" value="Arf"/>
    <property type="match status" value="1"/>
</dbReference>
<dbReference type="PRINTS" id="PR00328">
    <property type="entry name" value="SAR1GTPBP"/>
</dbReference>
<dbReference type="SMART" id="SM00177">
    <property type="entry name" value="ARF"/>
    <property type="match status" value="1"/>
</dbReference>
<dbReference type="SMART" id="SM00178">
    <property type="entry name" value="SAR"/>
    <property type="match status" value="1"/>
</dbReference>
<dbReference type="SUPFAM" id="SSF52540">
    <property type="entry name" value="P-loop containing nucleoside triphosphate hydrolases"/>
    <property type="match status" value="1"/>
</dbReference>
<dbReference type="PROSITE" id="PS51417">
    <property type="entry name" value="ARF"/>
    <property type="match status" value="1"/>
</dbReference>